<comment type="alternative products">
    <event type="alternative splicing"/>
    <isoform>
        <id>Q84WM0-1</id>
        <name>1</name>
        <sequence type="displayed"/>
    </isoform>
    <text>A number of isoforms are produced. According to EST sequences.</text>
</comment>
<comment type="similarity">
    <text evidence="3">Belongs to the eukaryotic ribosomal protein eL29 family.</text>
</comment>
<proteinExistence type="inferred from homology"/>
<evidence type="ECO:0000256" key="1">
    <source>
        <dbReference type="SAM" id="MobiDB-lite"/>
    </source>
</evidence>
<evidence type="ECO:0000303" key="2">
    <source>
    </source>
</evidence>
<evidence type="ECO:0000305" key="3"/>
<organism>
    <name type="scientific">Arabidopsis thaliana</name>
    <name type="common">Mouse-ear cress</name>
    <dbReference type="NCBI Taxonomy" id="3702"/>
    <lineage>
        <taxon>Eukaryota</taxon>
        <taxon>Viridiplantae</taxon>
        <taxon>Streptophyta</taxon>
        <taxon>Embryophyta</taxon>
        <taxon>Tracheophyta</taxon>
        <taxon>Spermatophyta</taxon>
        <taxon>Magnoliopsida</taxon>
        <taxon>eudicotyledons</taxon>
        <taxon>Gunneridae</taxon>
        <taxon>Pentapetalae</taxon>
        <taxon>rosids</taxon>
        <taxon>malvids</taxon>
        <taxon>Brassicales</taxon>
        <taxon>Brassicaceae</taxon>
        <taxon>Camelineae</taxon>
        <taxon>Arabidopsis</taxon>
    </lineage>
</organism>
<reference key="1">
    <citation type="journal article" date="2000" name="Nature">
        <title>Sequence and analysis of chromosome 3 of the plant Arabidopsis thaliana.</title>
        <authorList>
            <person name="Salanoubat M."/>
            <person name="Lemcke K."/>
            <person name="Rieger M."/>
            <person name="Ansorge W."/>
            <person name="Unseld M."/>
            <person name="Fartmann B."/>
            <person name="Valle G."/>
            <person name="Bloecker H."/>
            <person name="Perez-Alonso M."/>
            <person name="Obermaier B."/>
            <person name="Delseny M."/>
            <person name="Boutry M."/>
            <person name="Grivell L.A."/>
            <person name="Mache R."/>
            <person name="Puigdomenech P."/>
            <person name="De Simone V."/>
            <person name="Choisne N."/>
            <person name="Artiguenave F."/>
            <person name="Robert C."/>
            <person name="Brottier P."/>
            <person name="Wincker P."/>
            <person name="Cattolico L."/>
            <person name="Weissenbach J."/>
            <person name="Saurin W."/>
            <person name="Quetier F."/>
            <person name="Schaefer M."/>
            <person name="Mueller-Auer S."/>
            <person name="Gabel C."/>
            <person name="Fuchs M."/>
            <person name="Benes V."/>
            <person name="Wurmbach E."/>
            <person name="Drzonek H."/>
            <person name="Erfle H."/>
            <person name="Jordan N."/>
            <person name="Bangert S."/>
            <person name="Wiedelmann R."/>
            <person name="Kranz H."/>
            <person name="Voss H."/>
            <person name="Holland R."/>
            <person name="Brandt P."/>
            <person name="Nyakatura G."/>
            <person name="Vezzi A."/>
            <person name="D'Angelo M."/>
            <person name="Pallavicini A."/>
            <person name="Toppo S."/>
            <person name="Simionati B."/>
            <person name="Conrad A."/>
            <person name="Hornischer K."/>
            <person name="Kauer G."/>
            <person name="Loehnert T.-H."/>
            <person name="Nordsiek G."/>
            <person name="Reichelt J."/>
            <person name="Scharfe M."/>
            <person name="Schoen O."/>
            <person name="Bargues M."/>
            <person name="Terol J."/>
            <person name="Climent J."/>
            <person name="Navarro P."/>
            <person name="Collado C."/>
            <person name="Perez-Perez A."/>
            <person name="Ottenwaelder B."/>
            <person name="Duchemin D."/>
            <person name="Cooke R."/>
            <person name="Laudie M."/>
            <person name="Berger-Llauro C."/>
            <person name="Purnelle B."/>
            <person name="Masuy D."/>
            <person name="de Haan M."/>
            <person name="Maarse A.C."/>
            <person name="Alcaraz J.-P."/>
            <person name="Cottet A."/>
            <person name="Casacuberta E."/>
            <person name="Monfort A."/>
            <person name="Argiriou A."/>
            <person name="Flores M."/>
            <person name="Liguori R."/>
            <person name="Vitale D."/>
            <person name="Mannhaupt G."/>
            <person name="Haase D."/>
            <person name="Schoof H."/>
            <person name="Rudd S."/>
            <person name="Zaccaria P."/>
            <person name="Mewes H.-W."/>
            <person name="Mayer K.F.X."/>
            <person name="Kaul S."/>
            <person name="Town C.D."/>
            <person name="Koo H.L."/>
            <person name="Tallon L.J."/>
            <person name="Jenkins J."/>
            <person name="Rooney T."/>
            <person name="Rizzo M."/>
            <person name="Walts A."/>
            <person name="Utterback T."/>
            <person name="Fujii C.Y."/>
            <person name="Shea T.P."/>
            <person name="Creasy T.H."/>
            <person name="Haas B."/>
            <person name="Maiti R."/>
            <person name="Wu D."/>
            <person name="Peterson J."/>
            <person name="Van Aken S."/>
            <person name="Pai G."/>
            <person name="Militscher J."/>
            <person name="Sellers P."/>
            <person name="Gill J.E."/>
            <person name="Feldblyum T.V."/>
            <person name="Preuss D."/>
            <person name="Lin X."/>
            <person name="Nierman W.C."/>
            <person name="Salzberg S.L."/>
            <person name="White O."/>
            <person name="Venter J.C."/>
            <person name="Fraser C.M."/>
            <person name="Kaneko T."/>
            <person name="Nakamura Y."/>
            <person name="Sato S."/>
            <person name="Kato T."/>
            <person name="Asamizu E."/>
            <person name="Sasamoto S."/>
            <person name="Kimura T."/>
            <person name="Idesawa K."/>
            <person name="Kawashima K."/>
            <person name="Kishida Y."/>
            <person name="Kiyokawa C."/>
            <person name="Kohara M."/>
            <person name="Matsumoto M."/>
            <person name="Matsuno A."/>
            <person name="Muraki A."/>
            <person name="Nakayama S."/>
            <person name="Nakazaki N."/>
            <person name="Shinpo S."/>
            <person name="Takeuchi C."/>
            <person name="Wada T."/>
            <person name="Watanabe A."/>
            <person name="Yamada M."/>
            <person name="Yasuda M."/>
            <person name="Tabata S."/>
        </authorList>
    </citation>
    <scope>NUCLEOTIDE SEQUENCE [LARGE SCALE GENOMIC DNA]</scope>
    <source>
        <strain>cv. Columbia</strain>
    </source>
</reference>
<reference key="2">
    <citation type="journal article" date="2017" name="Plant J.">
        <title>Araport11: a complete reannotation of the Arabidopsis thaliana reference genome.</title>
        <authorList>
            <person name="Cheng C.Y."/>
            <person name="Krishnakumar V."/>
            <person name="Chan A.P."/>
            <person name="Thibaud-Nissen F."/>
            <person name="Schobel S."/>
            <person name="Town C.D."/>
        </authorList>
    </citation>
    <scope>GENOME REANNOTATION</scope>
    <source>
        <strain>cv. Columbia</strain>
    </source>
</reference>
<reference key="3">
    <citation type="journal article" date="2003" name="Science">
        <title>Empirical analysis of transcriptional activity in the Arabidopsis genome.</title>
        <authorList>
            <person name="Yamada K."/>
            <person name="Lim J."/>
            <person name="Dale J.M."/>
            <person name="Chen H."/>
            <person name="Shinn P."/>
            <person name="Palm C.J."/>
            <person name="Southwick A.M."/>
            <person name="Wu H.C."/>
            <person name="Kim C.J."/>
            <person name="Nguyen M."/>
            <person name="Pham P.K."/>
            <person name="Cheuk R.F."/>
            <person name="Karlin-Newmann G."/>
            <person name="Liu S.X."/>
            <person name="Lam B."/>
            <person name="Sakano H."/>
            <person name="Wu T."/>
            <person name="Yu G."/>
            <person name="Miranda M."/>
            <person name="Quach H.L."/>
            <person name="Tripp M."/>
            <person name="Chang C.H."/>
            <person name="Lee J.M."/>
            <person name="Toriumi M.J."/>
            <person name="Chan M.M."/>
            <person name="Tang C.C."/>
            <person name="Onodera C.S."/>
            <person name="Deng J.M."/>
            <person name="Akiyama K."/>
            <person name="Ansari Y."/>
            <person name="Arakawa T."/>
            <person name="Banh J."/>
            <person name="Banno F."/>
            <person name="Bowser L."/>
            <person name="Brooks S.Y."/>
            <person name="Carninci P."/>
            <person name="Chao Q."/>
            <person name="Choy N."/>
            <person name="Enju A."/>
            <person name="Goldsmith A.D."/>
            <person name="Gurjal M."/>
            <person name="Hansen N.F."/>
            <person name="Hayashizaki Y."/>
            <person name="Johnson-Hopson C."/>
            <person name="Hsuan V.W."/>
            <person name="Iida K."/>
            <person name="Karnes M."/>
            <person name="Khan S."/>
            <person name="Koesema E."/>
            <person name="Ishida J."/>
            <person name="Jiang P.X."/>
            <person name="Jones T."/>
            <person name="Kawai J."/>
            <person name="Kamiya A."/>
            <person name="Meyers C."/>
            <person name="Nakajima M."/>
            <person name="Narusaka M."/>
            <person name="Seki M."/>
            <person name="Sakurai T."/>
            <person name="Satou M."/>
            <person name="Tamse R."/>
            <person name="Vaysberg M."/>
            <person name="Wallender E.K."/>
            <person name="Wong C."/>
            <person name="Yamamura Y."/>
            <person name="Yuan S."/>
            <person name="Shinozaki K."/>
            <person name="Davis R.W."/>
            <person name="Theologis A."/>
            <person name="Ecker J.R."/>
        </authorList>
    </citation>
    <scope>NUCLEOTIDE SEQUENCE [LARGE SCALE MRNA]</scope>
    <source>
        <strain>cv. Columbia</strain>
    </source>
</reference>
<reference key="4">
    <citation type="journal article" date="2001" name="Plant Physiol.">
        <title>The organization of cytoplasmic ribosomal protein genes in the Arabidopsis genome.</title>
        <authorList>
            <person name="Barakat A."/>
            <person name="Szick-Miranda K."/>
            <person name="Chang I.-F."/>
            <person name="Guyot R."/>
            <person name="Blanc G."/>
            <person name="Cooke R."/>
            <person name="Delseny M."/>
            <person name="Bailey-Serres J."/>
        </authorList>
    </citation>
    <scope>GENE FAMILY ORGANIZATION</scope>
    <scope>NOMENCLATURE</scope>
</reference>
<reference key="5">
    <citation type="journal article" date="2023" name="Plant Cell">
        <title>An updated nomenclature for plant ribosomal protein genes.</title>
        <authorList>
            <person name="Scarpin M.R."/>
            <person name="Busche M."/>
            <person name="Martinez R.E."/>
            <person name="Harper L.C."/>
            <person name="Reiser L."/>
            <person name="Szakonyi D."/>
            <person name="Merchante C."/>
            <person name="Lan T."/>
            <person name="Xiong W."/>
            <person name="Mo B."/>
            <person name="Tang G."/>
            <person name="Chen X."/>
            <person name="Bailey-Serres J."/>
            <person name="Browning K.S."/>
            <person name="Brunkard J.O."/>
        </authorList>
    </citation>
    <scope>NOMENCLATURE</scope>
</reference>
<dbReference type="EMBL" id="AC023912">
    <property type="protein sequence ID" value="AAF63830.1"/>
    <property type="molecule type" value="Genomic_DNA"/>
</dbReference>
<dbReference type="EMBL" id="AC036106">
    <property type="protein sequence ID" value="AAG51000.1"/>
    <property type="molecule type" value="Genomic_DNA"/>
</dbReference>
<dbReference type="EMBL" id="CP002686">
    <property type="protein sequence ID" value="AEE74440.1"/>
    <property type="molecule type" value="Genomic_DNA"/>
</dbReference>
<dbReference type="EMBL" id="CP002686">
    <property type="protein sequence ID" value="AEE74441.1"/>
    <property type="molecule type" value="Genomic_DNA"/>
</dbReference>
<dbReference type="EMBL" id="BT003047">
    <property type="protein sequence ID" value="AAO23612.1"/>
    <property type="molecule type" value="mRNA"/>
</dbReference>
<dbReference type="RefSeq" id="NP_001118594.1">
    <molecule id="Q84WM0-1"/>
    <property type="nucleotide sequence ID" value="NM_001125122.1"/>
</dbReference>
<dbReference type="RefSeq" id="NP_001189832.1">
    <molecule id="Q84WM0-1"/>
    <property type="nucleotide sequence ID" value="NM_001202903.1"/>
</dbReference>
<dbReference type="SMR" id="Q84WM0"/>
<dbReference type="FunCoup" id="Q84WM0">
    <property type="interactions" value="1965"/>
</dbReference>
<dbReference type="STRING" id="3702.Q84WM0"/>
<dbReference type="PaxDb" id="3702-AT3G06680.1"/>
<dbReference type="EnsemblPlants" id="AT3G06680.2">
    <molecule id="Q84WM0-1"/>
    <property type="protein sequence ID" value="AT3G06680.2"/>
    <property type="gene ID" value="AT3G06680"/>
</dbReference>
<dbReference type="EnsemblPlants" id="AT3G06680.3">
    <molecule id="Q84WM0-1"/>
    <property type="protein sequence ID" value="AT3G06680.3"/>
    <property type="gene ID" value="AT3G06680"/>
</dbReference>
<dbReference type="GeneID" id="819853"/>
<dbReference type="Gramene" id="AT3G06680.2">
    <molecule id="Q84WM0-1"/>
    <property type="protein sequence ID" value="AT3G06680.2"/>
    <property type="gene ID" value="AT3G06680"/>
</dbReference>
<dbReference type="Gramene" id="AT3G06680.3">
    <molecule id="Q84WM0-1"/>
    <property type="protein sequence ID" value="AT3G06680.3"/>
    <property type="gene ID" value="AT3G06680"/>
</dbReference>
<dbReference type="KEGG" id="ath:AT3G06680"/>
<dbReference type="Araport" id="AT3G06680"/>
<dbReference type="TAIR" id="AT3G06680"/>
<dbReference type="eggNOG" id="KOG3504">
    <property type="taxonomic scope" value="Eukaryota"/>
</dbReference>
<dbReference type="HOGENOM" id="CLU_169255_1_0_1"/>
<dbReference type="InParanoid" id="Q84WM0"/>
<dbReference type="OMA" id="PRTNKYP"/>
<dbReference type="PhylomeDB" id="Q84WM0"/>
<dbReference type="PRO" id="PR:Q84WM0"/>
<dbReference type="Proteomes" id="UP000006548">
    <property type="component" value="Chromosome 3"/>
</dbReference>
<dbReference type="ExpressionAtlas" id="Q84WM0">
    <property type="expression patterns" value="baseline and differential"/>
</dbReference>
<dbReference type="GO" id="GO:1990904">
    <property type="term" value="C:ribonucleoprotein complex"/>
    <property type="evidence" value="ECO:0007669"/>
    <property type="project" value="UniProtKB-KW"/>
</dbReference>
<dbReference type="GO" id="GO:0005840">
    <property type="term" value="C:ribosome"/>
    <property type="evidence" value="ECO:0007669"/>
    <property type="project" value="UniProtKB-KW"/>
</dbReference>
<dbReference type="GO" id="GO:0003735">
    <property type="term" value="F:structural constituent of ribosome"/>
    <property type="evidence" value="ECO:0007669"/>
    <property type="project" value="InterPro"/>
</dbReference>
<dbReference type="GO" id="GO:0006412">
    <property type="term" value="P:translation"/>
    <property type="evidence" value="ECO:0007669"/>
    <property type="project" value="InterPro"/>
</dbReference>
<dbReference type="Gene3D" id="6.10.140.1730">
    <property type="match status" value="1"/>
</dbReference>
<dbReference type="InterPro" id="IPR002673">
    <property type="entry name" value="Ribosomal_eL29"/>
</dbReference>
<dbReference type="PANTHER" id="PTHR12884">
    <property type="entry name" value="60S RIBOSOMAL PROTEIN L29"/>
    <property type="match status" value="1"/>
</dbReference>
<dbReference type="PANTHER" id="PTHR12884:SF39">
    <property type="entry name" value="LARGE RIBOSOMAL SUBUNIT PROTEIN EL29Y-RELATED"/>
    <property type="match status" value="1"/>
</dbReference>
<dbReference type="Pfam" id="PF01779">
    <property type="entry name" value="Ribosomal_L29e"/>
    <property type="match status" value="1"/>
</dbReference>
<accession>Q84WM0</accession>
<accession>Q9M7X5</accession>
<name>RL292_ARATH</name>
<gene>
    <name type="primary">RPL29B</name>
    <name type="ordered locus">At3g06680</name>
    <name type="ORF">F3E22.18</name>
    <name type="ORF">T8E24.9</name>
</gene>
<sequence>MAKSKNHTAHNQSAKAHKNGIKKPRRHRHTPTRGMDPKFLRNQRYARKHNVKSGENAGVEE</sequence>
<protein>
    <recommendedName>
        <fullName evidence="2">Large ribosomal subunit protein eL29y</fullName>
    </recommendedName>
    <alternativeName>
        <fullName>60S ribosomal protein L29-2</fullName>
    </alternativeName>
</protein>
<keyword id="KW-0025">Alternative splicing</keyword>
<keyword id="KW-1185">Reference proteome</keyword>
<keyword id="KW-0687">Ribonucleoprotein</keyword>
<keyword id="KW-0689">Ribosomal protein</keyword>
<feature type="chain" id="PRO_0000244746" description="Large ribosomal subunit protein eL29y">
    <location>
        <begin position="1"/>
        <end position="61"/>
    </location>
</feature>
<feature type="region of interest" description="Disordered" evidence="1">
    <location>
        <begin position="1"/>
        <end position="61"/>
    </location>
</feature>
<feature type="compositionally biased region" description="Basic residues" evidence="1">
    <location>
        <begin position="15"/>
        <end position="31"/>
    </location>
</feature>
<feature type="sequence conflict" description="In Ref. 3; AAO23612." evidence="3" ref="3">
    <original>R</original>
    <variation>V</variation>
    <location>
        <position position="47"/>
    </location>
</feature>